<sequence length="770" mass="86943">MASLVYRQLLANSYTSDLQDTIDDISAQKTENVTVNPGPFAQTGYALVEWTHGDITTDETVQQTLDGPYAPSSVIIQPQYWVLMNPETADVIAEADATNKKYACVMLAPNTEEGDKQYTILGRQITINLGNTDQNRYKFFDLASENGETYSKIQELLTPNRLNAFMKDQGRLYVYHGTVPNISTGYYTLDDIANVQTNIKCNYYIVPKSQTQQLEDFLKNGLPPIQESRYIMPVERSVQNIYRAKPNEDIVISKTSLWKEMQYNRDIVIRFKFGNTIIKSGGLGYKWSEISYKPMNYEYTYERDGETVVAHTTCSVAGVNDFGYNSGSLPTDFVVSKYEVLKGNSYVYIDYWDDSQAFKNMVYVRSLSAEFNAINCTGGTYDFQLPVGQWPQMRGGNVTLNSDAVTLSTQYTDFVSLNSLRFRFKPAIGEPFFEITRTRETRLYGLPASNPMGGNEYYETAGRFSLISLVPSNDDYQTPIQNSTTVRQDLEQQISDLREEFNQLSSEIAMSQLIDLALLPLDMFSMFSGIKSTIDAVKSVTTSVMKKMKTSTLAKSVSTITEELSDAATSVSRASSIRSNASVWNNLVDTRTQTSVATNDIATQTSRIASKLRVKEFATQTEGGLSFNDISAAVLKTKIDKIETVQPKILPTIITESVDKFIPTRQYRIIDKDIAYEISNSGKYFAYRVDTFEEVIFDVEKFADLVTDSPVISAIIDFKTLKNLNDNFGITKEQAYNLLRSDPRVLKDFINQNNPIIRNRIEQLILQCRI</sequence>
<proteinExistence type="evidence at transcript level"/>
<reference key="1">
    <citation type="journal article" date="1994" name="Virology">
        <title>A unique VP4 gene allele carried by an unusual bovine rotavirus strain, 993/83.</title>
        <authorList>
            <person name="Isegawa Y."/>
            <person name="Nakagomi O."/>
            <person name="Bruessow H."/>
            <person name="Minamoto N."/>
            <person name="Nakagomi T."/>
            <person name="Ueda S."/>
        </authorList>
    </citation>
    <scope>NUCLEOTIDE SEQUENCE [MRNA]</scope>
</reference>
<evidence type="ECO:0000255" key="1">
    <source>
        <dbReference type="HAMAP-Rule" id="MF_04132"/>
    </source>
</evidence>
<organismHost>
    <name type="scientific">Bos taurus</name>
    <name type="common">Bovine</name>
    <dbReference type="NCBI Taxonomy" id="9913"/>
</organismHost>
<protein>
    <recommendedName>
        <fullName evidence="1">Outer capsid protein VP4</fullName>
    </recommendedName>
    <alternativeName>
        <fullName evidence="1">Hemagglutinin</fullName>
    </alternativeName>
    <component>
        <recommendedName>
            <fullName evidence="1">Outer capsid protein VP8*</fullName>
        </recommendedName>
    </component>
    <component>
        <recommendedName>
            <fullName evidence="1">Outer capsid protein VP5*</fullName>
        </recommendedName>
    </component>
</protein>
<comment type="function">
    <molecule>Outer capsid protein VP4</molecule>
    <text evidence="1">Spike-forming protein that mediates virion attachment to the host epithelial cell receptors and plays a major role in cell penetration, determination of host range restriction and virulence. Rotavirus attachment and entry into the host cell probably involves multiple sequential contacts between the outer capsid proteins VP4 and VP7, and the cell receptors. It is subsequently lost, together with VP7, following virus entry into the host cell. Following entry into the host cell, low intracellular or intravesicular Ca(2+) concentration probably causes the calcium-stabilized VP7 trimers to dissociate from the virion. This step is probably necessary for the membrane-disrupting entry step and the release of VP4, which is locked onto the virion by VP7. During the virus exit from the host cell, VP4 seems to be required to target the newly formed virions to the host cell lipid rafts.</text>
</comment>
<comment type="function">
    <molecule>Outer capsid protein VP5*</molecule>
    <text evidence="1">Forms the spike 'foot' and 'body' and acts as a membrane permeabilization protein that mediates release of viral particles from endosomal compartments into the cytoplasm. During entry, the part of VP5* that protrudes from the virus folds back on itself and reorganizes from a local dimer to a trimer. This reorganization may be linked to membrane penetration by exposing VP5* hydrophobic region. In integrin-dependent strains, VP5* targets the integrin heterodimer ITGA2/ITGB1 for cell attachment.</text>
</comment>
<comment type="function">
    <molecule>Outer capsid protein VP8*</molecule>
    <text evidence="1">Forms the head of the spikes and mediates the recognition of specific host cell surface glycans. It is the viral hemagglutinin and an important target of neutralizing antibodies. In sialic acid-dependent strains, VP8* binds to host cell sialic acid, most probably a ganglioside, providing the initial contact. In some other strains, VP8* mediates the attachment to histo-blood group antigens (HBGAs) for viral entry.</text>
</comment>
<comment type="subunit">
    <molecule>Outer capsid protein VP4</molecule>
    <text evidence="1">Homotrimer. VP4 adopts a dimeric appearance above the capsid surface, while forming a trimeric base anchored inside the capsid layer. Only hints of the third molecule are observed above the capsid surface. It probably performs a series of molecular rearrangements during viral entry. Prior to trypsin cleavage, it is flexible. The priming trypsin cleavage triggers its rearrangement into rigid spikes with approximate two-fold symmetry of their protruding parts. After an unknown second triggering event, cleaved VP4 may undergo another rearrangement, in which two VP5* subunits fold back on themselves and join a third subunit to form a tightly associated trimer, shaped like a folded umbrella. Interacts with VP6. Interacts with VP7.</text>
</comment>
<comment type="subunit">
    <molecule>Outer capsid protein VP5*</molecule>
    <text evidence="1">Homotrimer. The trimer is coiled-coil stabilized by its C-terminus, however, its N-terminus, known as antigen domain or 'body', seems to be flexible allowing it to self-associate either as a dimer or a trimer.</text>
</comment>
<comment type="subcellular location">
    <molecule>Outer capsid protein VP4</molecule>
    <subcellularLocation>
        <location evidence="1">Virion</location>
    </subcellularLocation>
    <subcellularLocation>
        <location evidence="1">Host rough endoplasmic reticulum</location>
    </subcellularLocation>
    <subcellularLocation>
        <location evidence="1">Host cell membrane</location>
    </subcellularLocation>
    <subcellularLocation>
        <location evidence="1">Host cytoplasm</location>
        <location evidence="1">Host cytoskeleton</location>
    </subcellularLocation>
    <subcellularLocation>
        <location evidence="1">Host endoplasmic reticulum-Golgi intermediate compartment</location>
    </subcellularLocation>
    <text evidence="1">The outer layer contains 180 copies of VP4, grouped as 60 dimers. Immature double-layered particles assembled in the cytoplasm bud across the membrane of the endoplasmic reticulum, acquiring during this process a transient lipid membrane that is modified with the ER resident viral glycoproteins NSP4 and VP7; these enveloped particles also contain VP4. As the particles move towards the interior of the ER cisternae, the transient lipid membrane and the non-structural protein NSP4 are lost, while the virus surface proteins VP4 and VP7 rearrange to form the outermost virus protein layer, yielding mature infectious triple-layered particles. VP4 also seems to associate with lipid rafts of the host cell membrane probably for the exit of the virus from the infected cell by an alternate pathway.</text>
</comment>
<comment type="subcellular location">
    <molecule>Outer capsid protein VP8*</molecule>
    <subcellularLocation>
        <location evidence="1">Virion</location>
    </subcellularLocation>
    <text evidence="1">Outer capsid protein.</text>
</comment>
<comment type="subcellular location">
    <molecule>Outer capsid protein VP5*</molecule>
    <subcellularLocation>
        <location evidence="1">Virion</location>
    </subcellularLocation>
    <text evidence="1">Outer capsid protein.</text>
</comment>
<comment type="domain">
    <molecule>Outer capsid protein VP4</molecule>
    <text evidence="1">The VP4 spike is divided into a foot, a stalk and body, and a head.</text>
</comment>
<comment type="PTM">
    <molecule>Outer capsid protein VP4</molecule>
    <text evidence="1">Proteolytic cleavage by trypsin results in activation of VP4 functions and greatly increases infectivity. The penetration into the host cell is dependent on trypsin treatment of VP4. It produces two peptides, VP5* and VP8* that remain associated with the virion. Cleavage of VP4 by trypsin probably occurs in vivo in the lumen of the intestine prior to infection of enterocytes. Trypsin seems to be incorporated into the three-layered viral particles but remains inactive as long as the viral outer capsid is intact and would only be activated upon the solubilization of the latter.</text>
</comment>
<comment type="miscellaneous">
    <text evidence="1">In group A rotaviruses, VP4 defines the P serotype.</text>
</comment>
<comment type="miscellaneous">
    <text evidence="1">Some rotavirus strains are neuraminidase-sensitive and require sialic acid to attach to the cell surface. Some rotavirus strains are integrin-dependent. Some rotavirus strains depend on ganglioside for their entry into the host cell. Hsp70 also seems to be involved in the entry of some strains.</text>
</comment>
<comment type="similarity">
    <text evidence="1">Belongs to the rotavirus VP4 family.</text>
</comment>
<dbReference type="EMBL" id="D16352">
    <property type="protein sequence ID" value="BAA03855.1"/>
    <property type="molecule type" value="mRNA"/>
</dbReference>
<dbReference type="PIR" id="A49283">
    <property type="entry name" value="A49283"/>
</dbReference>
<dbReference type="SMR" id="Q08010"/>
<dbReference type="GO" id="GO:0044172">
    <property type="term" value="C:host cell endoplasmic reticulum-Golgi intermediate compartment"/>
    <property type="evidence" value="ECO:0007669"/>
    <property type="project" value="UniProtKB-SubCell"/>
</dbReference>
<dbReference type="GO" id="GO:0020002">
    <property type="term" value="C:host cell plasma membrane"/>
    <property type="evidence" value="ECO:0007669"/>
    <property type="project" value="UniProtKB-SubCell"/>
</dbReference>
<dbReference type="GO" id="GO:0044168">
    <property type="term" value="C:host cell rough endoplasmic reticulum"/>
    <property type="evidence" value="ECO:0007669"/>
    <property type="project" value="UniProtKB-SubCell"/>
</dbReference>
<dbReference type="GO" id="GO:0044163">
    <property type="term" value="C:host cytoskeleton"/>
    <property type="evidence" value="ECO:0007669"/>
    <property type="project" value="UniProtKB-SubCell"/>
</dbReference>
<dbReference type="GO" id="GO:0016020">
    <property type="term" value="C:membrane"/>
    <property type="evidence" value="ECO:0007669"/>
    <property type="project" value="UniProtKB-KW"/>
</dbReference>
<dbReference type="GO" id="GO:0039624">
    <property type="term" value="C:viral outer capsid"/>
    <property type="evidence" value="ECO:0007669"/>
    <property type="project" value="UniProtKB-UniRule"/>
</dbReference>
<dbReference type="GO" id="GO:0039665">
    <property type="term" value="P:permeabilization of host organelle membrane involved in viral entry into host cell"/>
    <property type="evidence" value="ECO:0007669"/>
    <property type="project" value="UniProtKB-UniRule"/>
</dbReference>
<dbReference type="GO" id="GO:0019062">
    <property type="term" value="P:virion attachment to host cell"/>
    <property type="evidence" value="ECO:0007669"/>
    <property type="project" value="UniProtKB-UniRule"/>
</dbReference>
<dbReference type="Gene3D" id="1.20.5.170">
    <property type="match status" value="1"/>
</dbReference>
<dbReference type="Gene3D" id="2.60.120.200">
    <property type="match status" value="1"/>
</dbReference>
<dbReference type="HAMAP" id="MF_04132">
    <property type="entry name" value="Rota_A_VP4"/>
    <property type="match status" value="1"/>
</dbReference>
<dbReference type="HAMAP" id="MF_04125">
    <property type="entry name" value="Rota_VP4"/>
    <property type="match status" value="1"/>
</dbReference>
<dbReference type="InterPro" id="IPR013320">
    <property type="entry name" value="ConA-like_dom_sf"/>
</dbReference>
<dbReference type="InterPro" id="IPR042546">
    <property type="entry name" value="Rota_A_VP4"/>
</dbReference>
<dbReference type="InterPro" id="IPR035330">
    <property type="entry name" value="Rota_VP4_MID"/>
</dbReference>
<dbReference type="InterPro" id="IPR038017">
    <property type="entry name" value="Rota_VP4_MID_sf"/>
</dbReference>
<dbReference type="InterPro" id="IPR000416">
    <property type="entry name" value="VP4_concanavalin-like"/>
</dbReference>
<dbReference type="InterPro" id="IPR035329">
    <property type="entry name" value="VP4_helical"/>
</dbReference>
<dbReference type="Pfam" id="PF17477">
    <property type="entry name" value="Rota_VP4_MID"/>
    <property type="match status" value="1"/>
</dbReference>
<dbReference type="Pfam" id="PF00426">
    <property type="entry name" value="VP4_haemagglut"/>
    <property type="match status" value="1"/>
</dbReference>
<dbReference type="Pfam" id="PF17478">
    <property type="entry name" value="VP4_helical"/>
    <property type="match status" value="1"/>
</dbReference>
<dbReference type="SUPFAM" id="SSF49899">
    <property type="entry name" value="Concanavalin A-like lectins/glucanases"/>
    <property type="match status" value="1"/>
</dbReference>
<dbReference type="SUPFAM" id="SSF111379">
    <property type="entry name" value="VP4 membrane interaction domain"/>
    <property type="match status" value="1"/>
</dbReference>
<accession>Q08010</accession>
<feature type="chain" id="PRO_0000041015" description="Outer capsid protein VP4" evidence="1">
    <location>
        <begin position="1"/>
        <end position="770"/>
    </location>
</feature>
<feature type="chain" id="PRO_0000041016" description="Outer capsid protein VP8*" evidence="1">
    <location>
        <begin position="1"/>
        <end position="229"/>
    </location>
</feature>
<feature type="chain" id="PRO_0000041017" description="Outer capsid protein VP5*" evidence="1">
    <location>
        <begin position="244"/>
        <end position="770"/>
    </location>
</feature>
<feature type="region of interest" description="Spike head" evidence="1">
    <location>
        <begin position="65"/>
        <end position="222"/>
    </location>
</feature>
<feature type="region of interest" description="Spike body and stalk (antigen domain)" evidence="1">
    <location>
        <begin position="244"/>
        <end position="475"/>
    </location>
</feature>
<feature type="region of interest" description="Hydrophobic; possible role in virus entry into host cell" evidence="1">
    <location>
        <begin position="385"/>
        <end position="405"/>
    </location>
</feature>
<feature type="region of interest" description="Spike foot" evidence="1">
    <location>
        <begin position="506"/>
        <end position="770"/>
    </location>
</feature>
<feature type="coiled-coil region" evidence="1">
    <location>
        <begin position="480"/>
        <end position="507"/>
    </location>
</feature>
<feature type="short sequence motif" description="DGE motif; interaction with ITGA2/ITGB1 heterodimer" evidence="1">
    <location>
        <begin position="304"/>
        <end position="306"/>
    </location>
</feature>
<feature type="short sequence motif" description="YGL motif; interaction with ITGA4" evidence="1">
    <location>
        <begin position="444"/>
        <end position="446"/>
    </location>
</feature>
<feature type="short sequence motif" description="KID motif; interaction with HSPA8" evidence="1">
    <location>
        <begin position="638"/>
        <end position="640"/>
    </location>
</feature>
<feature type="site" description="Cleavage" evidence="1">
    <location>
        <begin position="229"/>
        <end position="230"/>
    </location>
</feature>
<feature type="site" description="Cleavage; associated with enhancement of infectivity" evidence="1">
    <location>
        <begin position="243"/>
        <end position="244"/>
    </location>
</feature>
<feature type="disulfide bond" evidence="1">
    <location>
        <begin position="314"/>
        <end position="376"/>
    </location>
</feature>
<organism>
    <name type="scientific">Rotavirus A (isolate RVA/Cow/Germany/993/1983/G18P[17])</name>
    <name type="common">RV-A</name>
    <dbReference type="NCBI Taxonomy" id="45408"/>
    <lineage>
        <taxon>Viruses</taxon>
        <taxon>Riboviria</taxon>
        <taxon>Orthornavirae</taxon>
        <taxon>Duplornaviricota</taxon>
        <taxon>Resentoviricetes</taxon>
        <taxon>Reovirales</taxon>
        <taxon>Sedoreoviridae</taxon>
        <taxon>Rotavirus</taxon>
        <taxon>Rotavirus A</taxon>
    </lineage>
</organism>
<keyword id="KW-0167">Capsid protein</keyword>
<keyword id="KW-0175">Coiled coil</keyword>
<keyword id="KW-1015">Disulfide bond</keyword>
<keyword id="KW-0348">Hemagglutinin</keyword>
<keyword id="KW-1032">Host cell membrane</keyword>
<keyword id="KW-1035">Host cytoplasm</keyword>
<keyword id="KW-1037">Host cytoskeleton</keyword>
<keyword id="KW-1038">Host endoplasmic reticulum</keyword>
<keyword id="KW-1043">Host membrane</keyword>
<keyword id="KW-0945">Host-virus interaction</keyword>
<keyword id="KW-0472">Membrane</keyword>
<keyword id="KW-1152">Outer capsid protein</keyword>
<keyword id="KW-1161">Viral attachment to host cell</keyword>
<keyword id="KW-1162">Viral penetration into host cytoplasm</keyword>
<keyword id="KW-1173">Viral penetration via permeabilization of host membrane</keyword>
<keyword id="KW-0946">Virion</keyword>
<keyword id="KW-1160">Virus entry into host cell</keyword>
<name>VP4_ROTB9</name>